<evidence type="ECO:0000255" key="1">
    <source>
        <dbReference type="PROSITE-ProRule" id="PRU00159"/>
    </source>
</evidence>
<evidence type="ECO:0000255" key="2">
    <source>
        <dbReference type="PROSITE-ProRule" id="PRU10027"/>
    </source>
</evidence>
<evidence type="ECO:0000256" key="3">
    <source>
        <dbReference type="SAM" id="MobiDB-lite"/>
    </source>
</evidence>
<protein>
    <recommendedName>
        <fullName>Probable serine/threonine-protein kinase DDB_G0280111</fullName>
        <ecNumber>2.7.11.1</ecNumber>
    </recommendedName>
</protein>
<comment type="catalytic activity">
    <reaction>
        <text>L-seryl-[protein] + ATP = O-phospho-L-seryl-[protein] + ADP + H(+)</text>
        <dbReference type="Rhea" id="RHEA:17989"/>
        <dbReference type="Rhea" id="RHEA-COMP:9863"/>
        <dbReference type="Rhea" id="RHEA-COMP:11604"/>
        <dbReference type="ChEBI" id="CHEBI:15378"/>
        <dbReference type="ChEBI" id="CHEBI:29999"/>
        <dbReference type="ChEBI" id="CHEBI:30616"/>
        <dbReference type="ChEBI" id="CHEBI:83421"/>
        <dbReference type="ChEBI" id="CHEBI:456216"/>
        <dbReference type="EC" id="2.7.11.1"/>
    </reaction>
</comment>
<comment type="catalytic activity">
    <reaction>
        <text>L-threonyl-[protein] + ATP = O-phospho-L-threonyl-[protein] + ADP + H(+)</text>
        <dbReference type="Rhea" id="RHEA:46608"/>
        <dbReference type="Rhea" id="RHEA-COMP:11060"/>
        <dbReference type="Rhea" id="RHEA-COMP:11605"/>
        <dbReference type="ChEBI" id="CHEBI:15378"/>
        <dbReference type="ChEBI" id="CHEBI:30013"/>
        <dbReference type="ChEBI" id="CHEBI:30616"/>
        <dbReference type="ChEBI" id="CHEBI:61977"/>
        <dbReference type="ChEBI" id="CHEBI:456216"/>
        <dbReference type="EC" id="2.7.11.1"/>
    </reaction>
</comment>
<comment type="similarity">
    <text evidence="1">Belongs to the protein kinase superfamily. Ser/Thr protein kinase family.</text>
</comment>
<name>Y0111_DICDI</name>
<dbReference type="EC" id="2.7.11.1"/>
<dbReference type="EMBL" id="AAFI02000035">
    <property type="protein sequence ID" value="EAL67282.1"/>
    <property type="molecule type" value="Genomic_DNA"/>
</dbReference>
<dbReference type="RefSeq" id="XP_641248.1">
    <property type="nucleotide sequence ID" value="XM_636156.1"/>
</dbReference>
<dbReference type="SMR" id="Q54VV7"/>
<dbReference type="FunCoup" id="Q54VV7">
    <property type="interactions" value="618"/>
</dbReference>
<dbReference type="STRING" id="44689.Q54VV7"/>
<dbReference type="GlyGen" id="Q54VV7">
    <property type="glycosylation" value="6 sites"/>
</dbReference>
<dbReference type="PaxDb" id="44689-DDB0229350"/>
<dbReference type="EnsemblProtists" id="EAL67282">
    <property type="protein sequence ID" value="EAL67282"/>
    <property type="gene ID" value="DDB_G0280111"/>
</dbReference>
<dbReference type="GeneID" id="8622380"/>
<dbReference type="KEGG" id="ddi:DDB_G0280111"/>
<dbReference type="dictyBase" id="DDB_G0280111"/>
<dbReference type="VEuPathDB" id="AmoebaDB:DDB_G0280111"/>
<dbReference type="eggNOG" id="KOG1989">
    <property type="taxonomic scope" value="Eukaryota"/>
</dbReference>
<dbReference type="HOGENOM" id="CLU_279716_0_0_1"/>
<dbReference type="InParanoid" id="Q54VV7"/>
<dbReference type="OMA" id="EYCSGGH"/>
<dbReference type="PRO" id="PR:Q54VV7"/>
<dbReference type="Proteomes" id="UP000002195">
    <property type="component" value="Chromosome 3"/>
</dbReference>
<dbReference type="GO" id="GO:0005737">
    <property type="term" value="C:cytoplasm"/>
    <property type="evidence" value="ECO:0000318"/>
    <property type="project" value="GO_Central"/>
</dbReference>
<dbReference type="GO" id="GO:0005524">
    <property type="term" value="F:ATP binding"/>
    <property type="evidence" value="ECO:0007669"/>
    <property type="project" value="UniProtKB-KW"/>
</dbReference>
<dbReference type="GO" id="GO:0005543">
    <property type="term" value="F:phospholipid binding"/>
    <property type="evidence" value="ECO:0007669"/>
    <property type="project" value="InterPro"/>
</dbReference>
<dbReference type="GO" id="GO:0106310">
    <property type="term" value="F:protein serine kinase activity"/>
    <property type="evidence" value="ECO:0007669"/>
    <property type="project" value="RHEA"/>
</dbReference>
<dbReference type="GO" id="GO:0004674">
    <property type="term" value="F:protein serine/threonine kinase activity"/>
    <property type="evidence" value="ECO:0000318"/>
    <property type="project" value="GO_Central"/>
</dbReference>
<dbReference type="CDD" id="cd14037">
    <property type="entry name" value="STKc_NAK_like"/>
    <property type="match status" value="1"/>
</dbReference>
<dbReference type="FunFam" id="1.10.510.10:FF:002523">
    <property type="entry name" value="Probable serine/threonine-protein kinase DDB_G0280111"/>
    <property type="match status" value="1"/>
</dbReference>
<dbReference type="Gene3D" id="1.10.510.10">
    <property type="entry name" value="Transferase(Phosphotransferase) domain 1"/>
    <property type="match status" value="1"/>
</dbReference>
<dbReference type="InterPro" id="IPR011417">
    <property type="entry name" value="ANTH_dom"/>
</dbReference>
<dbReference type="InterPro" id="IPR011009">
    <property type="entry name" value="Kinase-like_dom_sf"/>
</dbReference>
<dbReference type="InterPro" id="IPR000719">
    <property type="entry name" value="Prot_kinase_dom"/>
</dbReference>
<dbReference type="InterPro" id="IPR008271">
    <property type="entry name" value="Ser/Thr_kinase_AS"/>
</dbReference>
<dbReference type="PANTHER" id="PTHR22967">
    <property type="entry name" value="SERINE/THREONINE PROTEIN KINASE"/>
    <property type="match status" value="1"/>
</dbReference>
<dbReference type="PANTHER" id="PTHR22967:SF91">
    <property type="entry name" value="SERINE_THREONINE-PROTEIN KINASE DDB_G0280111-RELATED"/>
    <property type="match status" value="1"/>
</dbReference>
<dbReference type="Pfam" id="PF07651">
    <property type="entry name" value="ANTH"/>
    <property type="match status" value="1"/>
</dbReference>
<dbReference type="Pfam" id="PF00069">
    <property type="entry name" value="Pkinase"/>
    <property type="match status" value="1"/>
</dbReference>
<dbReference type="SMART" id="SM00220">
    <property type="entry name" value="S_TKc"/>
    <property type="match status" value="1"/>
</dbReference>
<dbReference type="SUPFAM" id="SSF56112">
    <property type="entry name" value="Protein kinase-like (PK-like)"/>
    <property type="match status" value="1"/>
</dbReference>
<dbReference type="PROSITE" id="PS50011">
    <property type="entry name" value="PROTEIN_KINASE_DOM"/>
    <property type="match status" value="1"/>
</dbReference>
<dbReference type="PROSITE" id="PS00108">
    <property type="entry name" value="PROTEIN_KINASE_ST"/>
    <property type="match status" value="1"/>
</dbReference>
<accession>Q54VV7</accession>
<sequence>MGNNQGKTLKIGSYHLNFVKQIAEGGFSYVFLVKDSNTSKHYALKRILIRDEDELKGVKHEISIMKRLTKHKNIVKILDYHKVSDKNNTEMFILMEYCSGGHLVEIMQKRLSSGSKFTDQEILKIFQDICESVAYMHSQQPLIIHRDLKVENVLLDEESGIYKLCDFGSATEEITRMKNKTEMQNAEDDISRHTTLQYRAPEIVDFYRSPVINEKIDIWALGCLLYKLLFYVTPFEDSGSLGILNSNYTIPPNHTHSNDLISLIKIMLNPDPINRPNIFEITNQLNLLRNQQPLFPSHKSNILLSYNENNNINNNNNNINNNNNNNIVNGKNIPKPLPKVVSQTTPTPTPPPPAPSQSPSPSPSPTVVNNIENNSNGLEHSNSNGNISQPSPTPPKRRATPGTTPSLQPVSFPPNNSNNSFDDPFRDSPRTNLSNNPFNVNSNDNSNSSNNNNNNNNNNNNNNNNNGNNITNEEILNIITQLTNNDQTNTFDSGLLLKLKSMKPGKGTMHIIVKRPLKEPLVCFKSLLLVHALLSEGNNIQFKSDVHDSKDLFNNLYLGWSKQKDRYLQLGELLSHYSLLLYKFILFHQKNYMIDGSFAFEEMKWGIPESLDSNNHPISINTIKALFDIMDHLFLVQNNLSDYCINNICSSNSSGSGNVPISLLQHCVNILNSSSYSIFCFISGSIDVLSKQFSDVDMKLISCVNQFQSMYTRLREQYTKLAQVPCFSDIFFPTLPNTAPTFTIVRSNSFNRLNSSLSDLNLNNNNNNNNNSNNSNNSNNSNSGNLSGNASLNSSFDNINSSNPFSTEPTFNPFSATTTNTSESGFGNFGLSEPTSNPSPRYQQSNNNNNNNNNNNGTPISLTPGSLSPVIGAKKPPLPPNIHHLQQQQHPQQQQQQQQQQQQQQQQQQQQQQQQQQQHPQQQGLRFPHSASLEDARLYTLILTPSSSPPLSPSTGPTTAAQQQQQQQQSQHTFDNFNINGHAPPVPQSTQPSFQPHVSFAPNVNINNNNNSHVSAPHSLNSSSSSISSISNPNLGGIAQKGSGNSLMPPPLYKPAARGHRRSQSSNGDEVRRRNLLQQQLEQNRDFLNHNRLLNKQSRMNNPNNLFDEGDSGFGDGEEEDEGLLN</sequence>
<feature type="chain" id="PRO_0000362038" description="Probable serine/threonine-protein kinase DDB_G0280111">
    <location>
        <begin position="1"/>
        <end position="1126"/>
    </location>
</feature>
<feature type="domain" description="Protein kinase" evidence="1">
    <location>
        <begin position="16"/>
        <end position="295"/>
    </location>
</feature>
<feature type="region of interest" description="Disordered" evidence="3">
    <location>
        <begin position="314"/>
        <end position="469"/>
    </location>
</feature>
<feature type="region of interest" description="Disordered" evidence="3">
    <location>
        <begin position="760"/>
        <end position="901"/>
    </location>
</feature>
<feature type="region of interest" description="Disordered" evidence="3">
    <location>
        <begin position="944"/>
        <end position="1072"/>
    </location>
</feature>
<feature type="region of interest" description="Disordered" evidence="3">
    <location>
        <begin position="1095"/>
        <end position="1126"/>
    </location>
</feature>
<feature type="compositionally biased region" description="Low complexity" evidence="3">
    <location>
        <begin position="314"/>
        <end position="333"/>
    </location>
</feature>
<feature type="compositionally biased region" description="Pro residues" evidence="3">
    <location>
        <begin position="347"/>
        <end position="364"/>
    </location>
</feature>
<feature type="compositionally biased region" description="Polar residues" evidence="3">
    <location>
        <begin position="367"/>
        <end position="390"/>
    </location>
</feature>
<feature type="compositionally biased region" description="Low complexity" evidence="3">
    <location>
        <begin position="413"/>
        <end position="422"/>
    </location>
</feature>
<feature type="compositionally biased region" description="Low complexity" evidence="3">
    <location>
        <begin position="432"/>
        <end position="469"/>
    </location>
</feature>
<feature type="compositionally biased region" description="Low complexity" evidence="3">
    <location>
        <begin position="760"/>
        <end position="795"/>
    </location>
</feature>
<feature type="compositionally biased region" description="Polar residues" evidence="3">
    <location>
        <begin position="796"/>
        <end position="825"/>
    </location>
</feature>
<feature type="compositionally biased region" description="Polar residues" evidence="3">
    <location>
        <begin position="833"/>
        <end position="845"/>
    </location>
</feature>
<feature type="compositionally biased region" description="Low complexity" evidence="3">
    <location>
        <begin position="846"/>
        <end position="856"/>
    </location>
</feature>
<feature type="compositionally biased region" description="Polar residues" evidence="3">
    <location>
        <begin position="857"/>
        <end position="866"/>
    </location>
</feature>
<feature type="compositionally biased region" description="Low complexity" evidence="3">
    <location>
        <begin position="886"/>
        <end position="901"/>
    </location>
</feature>
<feature type="compositionally biased region" description="Low complexity" evidence="3">
    <location>
        <begin position="953"/>
        <end position="971"/>
    </location>
</feature>
<feature type="compositionally biased region" description="Low complexity" evidence="3">
    <location>
        <begin position="1003"/>
        <end position="1035"/>
    </location>
</feature>
<feature type="compositionally biased region" description="Polar residues" evidence="3">
    <location>
        <begin position="1095"/>
        <end position="1105"/>
    </location>
</feature>
<feature type="compositionally biased region" description="Acidic residues" evidence="3">
    <location>
        <begin position="1108"/>
        <end position="1126"/>
    </location>
</feature>
<feature type="active site" description="Proton acceptor" evidence="1 2">
    <location>
        <position position="147"/>
    </location>
</feature>
<feature type="binding site" evidence="1">
    <location>
        <begin position="22"/>
        <end position="30"/>
    </location>
    <ligand>
        <name>ATP</name>
        <dbReference type="ChEBI" id="CHEBI:30616"/>
    </ligand>
</feature>
<feature type="binding site" evidence="1">
    <location>
        <position position="45"/>
    </location>
    <ligand>
        <name>ATP</name>
        <dbReference type="ChEBI" id="CHEBI:30616"/>
    </ligand>
</feature>
<organism>
    <name type="scientific">Dictyostelium discoideum</name>
    <name type="common">Social amoeba</name>
    <dbReference type="NCBI Taxonomy" id="44689"/>
    <lineage>
        <taxon>Eukaryota</taxon>
        <taxon>Amoebozoa</taxon>
        <taxon>Evosea</taxon>
        <taxon>Eumycetozoa</taxon>
        <taxon>Dictyostelia</taxon>
        <taxon>Dictyosteliales</taxon>
        <taxon>Dictyosteliaceae</taxon>
        <taxon>Dictyostelium</taxon>
    </lineage>
</organism>
<keyword id="KW-0067">ATP-binding</keyword>
<keyword id="KW-0418">Kinase</keyword>
<keyword id="KW-0547">Nucleotide-binding</keyword>
<keyword id="KW-1185">Reference proteome</keyword>
<keyword id="KW-0723">Serine/threonine-protein kinase</keyword>
<keyword id="KW-0808">Transferase</keyword>
<reference key="1">
    <citation type="journal article" date="2005" name="Nature">
        <title>The genome of the social amoeba Dictyostelium discoideum.</title>
        <authorList>
            <person name="Eichinger L."/>
            <person name="Pachebat J.A."/>
            <person name="Gloeckner G."/>
            <person name="Rajandream M.A."/>
            <person name="Sucgang R."/>
            <person name="Berriman M."/>
            <person name="Song J."/>
            <person name="Olsen R."/>
            <person name="Szafranski K."/>
            <person name="Xu Q."/>
            <person name="Tunggal B."/>
            <person name="Kummerfeld S."/>
            <person name="Madera M."/>
            <person name="Konfortov B.A."/>
            <person name="Rivero F."/>
            <person name="Bankier A.T."/>
            <person name="Lehmann R."/>
            <person name="Hamlin N."/>
            <person name="Davies R."/>
            <person name="Gaudet P."/>
            <person name="Fey P."/>
            <person name="Pilcher K."/>
            <person name="Chen G."/>
            <person name="Saunders D."/>
            <person name="Sodergren E.J."/>
            <person name="Davis P."/>
            <person name="Kerhornou A."/>
            <person name="Nie X."/>
            <person name="Hall N."/>
            <person name="Anjard C."/>
            <person name="Hemphill L."/>
            <person name="Bason N."/>
            <person name="Farbrother P."/>
            <person name="Desany B."/>
            <person name="Just E."/>
            <person name="Morio T."/>
            <person name="Rost R."/>
            <person name="Churcher C.M."/>
            <person name="Cooper J."/>
            <person name="Haydock S."/>
            <person name="van Driessche N."/>
            <person name="Cronin A."/>
            <person name="Goodhead I."/>
            <person name="Muzny D.M."/>
            <person name="Mourier T."/>
            <person name="Pain A."/>
            <person name="Lu M."/>
            <person name="Harper D."/>
            <person name="Lindsay R."/>
            <person name="Hauser H."/>
            <person name="James K.D."/>
            <person name="Quiles M."/>
            <person name="Madan Babu M."/>
            <person name="Saito T."/>
            <person name="Buchrieser C."/>
            <person name="Wardroper A."/>
            <person name="Felder M."/>
            <person name="Thangavelu M."/>
            <person name="Johnson D."/>
            <person name="Knights A."/>
            <person name="Loulseged H."/>
            <person name="Mungall K.L."/>
            <person name="Oliver K."/>
            <person name="Price C."/>
            <person name="Quail M.A."/>
            <person name="Urushihara H."/>
            <person name="Hernandez J."/>
            <person name="Rabbinowitsch E."/>
            <person name="Steffen D."/>
            <person name="Sanders M."/>
            <person name="Ma J."/>
            <person name="Kohara Y."/>
            <person name="Sharp S."/>
            <person name="Simmonds M.N."/>
            <person name="Spiegler S."/>
            <person name="Tivey A."/>
            <person name="Sugano S."/>
            <person name="White B."/>
            <person name="Walker D."/>
            <person name="Woodward J.R."/>
            <person name="Winckler T."/>
            <person name="Tanaka Y."/>
            <person name="Shaulsky G."/>
            <person name="Schleicher M."/>
            <person name="Weinstock G.M."/>
            <person name="Rosenthal A."/>
            <person name="Cox E.C."/>
            <person name="Chisholm R.L."/>
            <person name="Gibbs R.A."/>
            <person name="Loomis W.F."/>
            <person name="Platzer M."/>
            <person name="Kay R.R."/>
            <person name="Williams J.G."/>
            <person name="Dear P.H."/>
            <person name="Noegel A.A."/>
            <person name="Barrell B.G."/>
            <person name="Kuspa A."/>
        </authorList>
    </citation>
    <scope>NUCLEOTIDE SEQUENCE [LARGE SCALE GENOMIC DNA]</scope>
    <source>
        <strain>AX4</strain>
    </source>
</reference>
<proteinExistence type="inferred from homology"/>
<gene>
    <name type="ORF">DDB_G0280111</name>
</gene>